<reference key="1">
    <citation type="journal article" date="2008" name="PLoS ONE">
        <title>Genetic basis of virulence attenuation revealed by comparative genomic analysis of Mycobacterium tuberculosis strain H37Ra versus H37Rv.</title>
        <authorList>
            <person name="Zheng H."/>
            <person name="Lu L."/>
            <person name="Wang B."/>
            <person name="Pu S."/>
            <person name="Zhang X."/>
            <person name="Zhu G."/>
            <person name="Shi W."/>
            <person name="Zhang L."/>
            <person name="Wang H."/>
            <person name="Wang S."/>
            <person name="Zhao G."/>
            <person name="Zhang Y."/>
        </authorList>
    </citation>
    <scope>NUCLEOTIDE SEQUENCE [LARGE SCALE GENOMIC DNA]</scope>
    <source>
        <strain>ATCC 25177 / H37Ra</strain>
    </source>
</reference>
<feature type="chain" id="PRO_1000022854" description="2-C-methyl-D-erythritol 2,4-cyclodiphosphate synthase">
    <location>
        <begin position="1"/>
        <end position="159"/>
    </location>
</feature>
<feature type="binding site" evidence="1">
    <location>
        <begin position="12"/>
        <end position="14"/>
    </location>
    <ligand>
        <name>4-CDP-2-C-methyl-D-erythritol 2-phosphate</name>
        <dbReference type="ChEBI" id="CHEBI:57919"/>
    </ligand>
</feature>
<feature type="binding site" evidence="1">
    <location>
        <position position="12"/>
    </location>
    <ligand>
        <name>a divalent metal cation</name>
        <dbReference type="ChEBI" id="CHEBI:60240"/>
    </ligand>
</feature>
<feature type="binding site" evidence="1">
    <location>
        <position position="14"/>
    </location>
    <ligand>
        <name>a divalent metal cation</name>
        <dbReference type="ChEBI" id="CHEBI:60240"/>
    </ligand>
</feature>
<feature type="binding site" evidence="1">
    <location>
        <begin position="38"/>
        <end position="39"/>
    </location>
    <ligand>
        <name>4-CDP-2-C-methyl-D-erythritol 2-phosphate</name>
        <dbReference type="ChEBI" id="CHEBI:57919"/>
    </ligand>
</feature>
<feature type="binding site" evidence="1">
    <location>
        <position position="46"/>
    </location>
    <ligand>
        <name>a divalent metal cation</name>
        <dbReference type="ChEBI" id="CHEBI:60240"/>
    </ligand>
</feature>
<feature type="binding site" evidence="1">
    <location>
        <begin position="60"/>
        <end position="62"/>
    </location>
    <ligand>
        <name>4-CDP-2-C-methyl-D-erythritol 2-phosphate</name>
        <dbReference type="ChEBI" id="CHEBI:57919"/>
    </ligand>
</feature>
<feature type="binding site" evidence="1">
    <location>
        <begin position="133"/>
        <end position="136"/>
    </location>
    <ligand>
        <name>4-CDP-2-C-methyl-D-erythritol 2-phosphate</name>
        <dbReference type="ChEBI" id="CHEBI:57919"/>
    </ligand>
</feature>
<feature type="binding site" evidence="1">
    <location>
        <position position="143"/>
    </location>
    <ligand>
        <name>4-CDP-2-C-methyl-D-erythritol 2-phosphate</name>
        <dbReference type="ChEBI" id="CHEBI:57919"/>
    </ligand>
</feature>
<feature type="site" description="Transition state stabilizer" evidence="1">
    <location>
        <position position="38"/>
    </location>
</feature>
<feature type="site" description="Transition state stabilizer" evidence="1">
    <location>
        <position position="134"/>
    </location>
</feature>
<dbReference type="EC" id="4.6.1.12" evidence="1"/>
<dbReference type="EMBL" id="CP000611">
    <property type="protein sequence ID" value="ABQ75406.1"/>
    <property type="molecule type" value="Genomic_DNA"/>
</dbReference>
<dbReference type="RefSeq" id="WP_003419432.1">
    <property type="nucleotide sequence ID" value="NZ_CP016972.1"/>
</dbReference>
<dbReference type="SMR" id="A5U8Q6"/>
<dbReference type="GeneID" id="45427569"/>
<dbReference type="KEGG" id="mra:MRA_3620"/>
<dbReference type="eggNOG" id="COG0245">
    <property type="taxonomic scope" value="Bacteria"/>
</dbReference>
<dbReference type="HOGENOM" id="CLU_084630_1_0_11"/>
<dbReference type="UniPathway" id="UPA00056">
    <property type="reaction ID" value="UER00095"/>
</dbReference>
<dbReference type="Proteomes" id="UP000001988">
    <property type="component" value="Chromosome"/>
</dbReference>
<dbReference type="GO" id="GO:0008685">
    <property type="term" value="F:2-C-methyl-D-erythritol 2,4-cyclodiphosphate synthase activity"/>
    <property type="evidence" value="ECO:0007669"/>
    <property type="project" value="UniProtKB-UniRule"/>
</dbReference>
<dbReference type="GO" id="GO:0046872">
    <property type="term" value="F:metal ion binding"/>
    <property type="evidence" value="ECO:0007669"/>
    <property type="project" value="UniProtKB-KW"/>
</dbReference>
<dbReference type="GO" id="GO:0019288">
    <property type="term" value="P:isopentenyl diphosphate biosynthetic process, methylerythritol 4-phosphate pathway"/>
    <property type="evidence" value="ECO:0007669"/>
    <property type="project" value="UniProtKB-UniRule"/>
</dbReference>
<dbReference type="GO" id="GO:0016114">
    <property type="term" value="P:terpenoid biosynthetic process"/>
    <property type="evidence" value="ECO:0007669"/>
    <property type="project" value="InterPro"/>
</dbReference>
<dbReference type="CDD" id="cd00554">
    <property type="entry name" value="MECDP_synthase"/>
    <property type="match status" value="1"/>
</dbReference>
<dbReference type="FunFam" id="3.30.1330.50:FF:000003">
    <property type="entry name" value="2-C-methyl-D-erythritol 2,4-cyclodiphosphate synthase"/>
    <property type="match status" value="1"/>
</dbReference>
<dbReference type="Gene3D" id="3.30.1330.50">
    <property type="entry name" value="2-C-methyl-D-erythritol 2,4-cyclodiphosphate synthase"/>
    <property type="match status" value="1"/>
</dbReference>
<dbReference type="HAMAP" id="MF_00107">
    <property type="entry name" value="IspF"/>
    <property type="match status" value="1"/>
</dbReference>
<dbReference type="InterPro" id="IPR003526">
    <property type="entry name" value="MECDP_synthase"/>
</dbReference>
<dbReference type="InterPro" id="IPR020555">
    <property type="entry name" value="MECDP_synthase_CS"/>
</dbReference>
<dbReference type="InterPro" id="IPR036571">
    <property type="entry name" value="MECDP_synthase_sf"/>
</dbReference>
<dbReference type="NCBIfam" id="TIGR00151">
    <property type="entry name" value="ispF"/>
    <property type="match status" value="1"/>
</dbReference>
<dbReference type="PANTHER" id="PTHR43181">
    <property type="entry name" value="2-C-METHYL-D-ERYTHRITOL 2,4-CYCLODIPHOSPHATE SYNTHASE, CHLOROPLASTIC"/>
    <property type="match status" value="1"/>
</dbReference>
<dbReference type="PANTHER" id="PTHR43181:SF1">
    <property type="entry name" value="2-C-METHYL-D-ERYTHRITOL 2,4-CYCLODIPHOSPHATE SYNTHASE, CHLOROPLASTIC"/>
    <property type="match status" value="1"/>
</dbReference>
<dbReference type="Pfam" id="PF02542">
    <property type="entry name" value="YgbB"/>
    <property type="match status" value="1"/>
</dbReference>
<dbReference type="SUPFAM" id="SSF69765">
    <property type="entry name" value="IpsF-like"/>
    <property type="match status" value="1"/>
</dbReference>
<dbReference type="PROSITE" id="PS01350">
    <property type="entry name" value="ISPF"/>
    <property type="match status" value="1"/>
</dbReference>
<accession>A5U8Q6</accession>
<proteinExistence type="inferred from homology"/>
<name>ISPF_MYCTA</name>
<gene>
    <name evidence="1" type="primary">ispF</name>
    <name type="ordered locus">MRA_3620</name>
</gene>
<protein>
    <recommendedName>
        <fullName evidence="1">2-C-methyl-D-erythritol 2,4-cyclodiphosphate synthase</fullName>
        <shortName evidence="1">MECDP-synthase</shortName>
        <shortName evidence="1">MECPP-synthase</shortName>
        <shortName evidence="1">MECPS</shortName>
        <ecNumber evidence="1">4.6.1.12</ecNumber>
    </recommendedName>
</protein>
<organism>
    <name type="scientific">Mycobacterium tuberculosis (strain ATCC 25177 / H37Ra)</name>
    <dbReference type="NCBI Taxonomy" id="419947"/>
    <lineage>
        <taxon>Bacteria</taxon>
        <taxon>Bacillati</taxon>
        <taxon>Actinomycetota</taxon>
        <taxon>Actinomycetes</taxon>
        <taxon>Mycobacteriales</taxon>
        <taxon>Mycobacteriaceae</taxon>
        <taxon>Mycobacterium</taxon>
        <taxon>Mycobacterium tuberculosis complex</taxon>
    </lineage>
</organism>
<comment type="function">
    <text evidence="1">Involved in the biosynthesis of isopentenyl diphosphate (IPP) and dimethylallyl diphosphate (DMAPP), two major building blocks of isoprenoid compounds. Catalyzes the conversion of 4-diphosphocytidyl-2-C-methyl-D-erythritol 2-phosphate (CDP-ME2P) to 2-C-methyl-D-erythritol 2,4-cyclodiphosphate (ME-CPP) with a corresponding release of cytidine 5-monophosphate (CMP).</text>
</comment>
<comment type="catalytic activity">
    <reaction evidence="1">
        <text>4-CDP-2-C-methyl-D-erythritol 2-phosphate = 2-C-methyl-D-erythritol 2,4-cyclic diphosphate + CMP</text>
        <dbReference type="Rhea" id="RHEA:23864"/>
        <dbReference type="ChEBI" id="CHEBI:57919"/>
        <dbReference type="ChEBI" id="CHEBI:58483"/>
        <dbReference type="ChEBI" id="CHEBI:60377"/>
        <dbReference type="EC" id="4.6.1.12"/>
    </reaction>
</comment>
<comment type="cofactor">
    <cofactor evidence="1">
        <name>a divalent metal cation</name>
        <dbReference type="ChEBI" id="CHEBI:60240"/>
    </cofactor>
    <text evidence="1">Binds 1 divalent metal cation per subunit.</text>
</comment>
<comment type="pathway">
    <text evidence="1">Isoprenoid biosynthesis; isopentenyl diphosphate biosynthesis via DXP pathway; isopentenyl diphosphate from 1-deoxy-D-xylulose 5-phosphate: step 4/6.</text>
</comment>
<comment type="subunit">
    <text evidence="1">Homotrimer.</text>
</comment>
<comment type="similarity">
    <text evidence="1">Belongs to the IspF family.</text>
</comment>
<sequence>MNQLPRVGLGTDVHPIEPGRPCWLVGLLFPSADGCAGHSDGDVAVHALCDAVLSAAGLGDIGEVFGVDDPRWQGVSGADMLRHVVVLITQHGYRVGNAVVQVIGNRPKIGWRRLEAQAVLSRLLNAPVSVSATTTDGLGLTGRGEGLAAIATALVVSLR</sequence>
<keyword id="KW-0414">Isoprene biosynthesis</keyword>
<keyword id="KW-0456">Lyase</keyword>
<keyword id="KW-0479">Metal-binding</keyword>
<keyword id="KW-1185">Reference proteome</keyword>
<evidence type="ECO:0000255" key="1">
    <source>
        <dbReference type="HAMAP-Rule" id="MF_00107"/>
    </source>
</evidence>